<name>TR2M_AGRT4</name>
<organism>
    <name type="scientific">Agrobacterium tumefaciens (strain Ach5)</name>
    <dbReference type="NCBI Taxonomy" id="176298"/>
    <lineage>
        <taxon>Bacteria</taxon>
        <taxon>Pseudomonadati</taxon>
        <taxon>Pseudomonadota</taxon>
        <taxon>Alphaproteobacteria</taxon>
        <taxon>Hyphomicrobiales</taxon>
        <taxon>Rhizobiaceae</taxon>
        <taxon>Rhizobium/Agrobacterium group</taxon>
        <taxon>Agrobacterium</taxon>
        <taxon>Agrobacterium tumefaciens complex</taxon>
    </lineage>
</organism>
<protein>
    <recommendedName>
        <fullName>Tryptophan 2-monooxygenase</fullName>
        <ecNumber>1.13.12.3</ecNumber>
    </recommendedName>
</protein>
<geneLocation type="plasmid">
    <name>pTiAch5</name>
</geneLocation>
<sequence length="755" mass="83947">MSASPLLDNQCDHLPTKMVDLTMVDKADELDRRVSDAFLEREASRGRRITQISTECSAGLACKRLADGRFPEISAGGKVAVLSAYIYIGKEILGRILESKPWARATVSGLVAIDLAPFCMDFSEAQLIQALFLLSGKRCAPIDLSHFVAISISKTAGFRTLPMPLYENGTMKCVTGFTITLEGAVPFDMVAYGRNLMLKGSAGSFPTIDLLYDYRPFFDQCSDSGRIGFFPEDVPKPKVAVIGAGISGLVVANELLHAGVDDVTIYEASDRVGGKLWSHAFRDAPSVVAEMGAMRFPPAAFCLFFFLERYGLSSMRPFPNPGTVDTYLVYQGVQYMWKAGQLPPKLFHRVYNGWRAFLKDGFYERDIVLASPVAITQALKSGDIRWAHDSWQIWLNRFGRESFSSGIERIFLGTHPPGGETWSFPHDWDLFKLMGIGSGGFGPVFESGFIEILRLVINGYEENQRMCPEGISELPRRIASEVVNGVSVSQRICHVQVRAIQKEKTKIKIRLKSGISELYDKVVVTSGLANIQLRHCLTCDTNIFQAPVNQAVDNSHMTGSSKLFLMTERKFWLDHILPSCVLMDGIAKAVYCLDYEPQDPNGKGLVLISYTWEDDSHKLLAVPDKKERLCLLRDAISRSFPAFAQHLFPACADYDQNVIQHDWLTDENAGGAFKLNRRGEDFYSEELFFQALDTANDTGVYLAGCSCSFTGGWVEGANRTPCNAVCAIIHNCGGILAKGNPLEHSWKRYNYRTRN</sequence>
<accession>P0A3V2</accession>
<accession>P04029</accession>
<evidence type="ECO:0000250" key="1"/>
<evidence type="ECO:0000305" key="2"/>
<keyword id="KW-0073">Auxin biosynthesis</keyword>
<keyword id="KW-0192">Crown gall tumor</keyword>
<keyword id="KW-0285">Flavoprotein</keyword>
<keyword id="KW-0288">FMN</keyword>
<keyword id="KW-0503">Monooxygenase</keyword>
<keyword id="KW-0560">Oxidoreductase</keyword>
<keyword id="KW-0614">Plasmid</keyword>
<comment type="catalytic activity">
    <reaction>
        <text>L-tryptophan + O2 = indole-3-acetamide + CO2 + H2O</text>
        <dbReference type="Rhea" id="RHEA:16165"/>
        <dbReference type="ChEBI" id="CHEBI:15377"/>
        <dbReference type="ChEBI" id="CHEBI:15379"/>
        <dbReference type="ChEBI" id="CHEBI:16031"/>
        <dbReference type="ChEBI" id="CHEBI:16526"/>
        <dbReference type="ChEBI" id="CHEBI:57912"/>
        <dbReference type="EC" id="1.13.12.3"/>
    </reaction>
</comment>
<comment type="cofactor">
    <cofactor evidence="1">
        <name>FMN</name>
        <dbReference type="ChEBI" id="CHEBI:58210"/>
    </cofactor>
    <text evidence="1">Binds 1 FMN per subunit.</text>
</comment>
<comment type="pathway">
    <text>Plant hormone metabolism; auxin biosynthesis.</text>
</comment>
<comment type="similarity">
    <text evidence="2">Belongs to the tryptophan 2-monooxygenase family.</text>
</comment>
<reference key="1">
    <citation type="journal article" date="1984" name="EMBO J.">
        <title>The complete nucleotide sequence of the TL-DNA of the Agrobacterium tumefaciens plasmid pTiAch5.</title>
        <authorList>
            <person name="Gielen J."/>
            <person name="de Beuckeleer M."/>
            <person name="Seurinck J."/>
            <person name="Deboeck F."/>
            <person name="de Greve H."/>
            <person name="Lemmers M."/>
            <person name="van Montagu M."/>
            <person name="Schell J."/>
        </authorList>
    </citation>
    <scope>NUCLEOTIDE SEQUENCE [GENOMIC DNA]</scope>
</reference>
<dbReference type="EC" id="1.13.12.3"/>
<dbReference type="PIR" id="A04497">
    <property type="entry name" value="QQAG4T"/>
</dbReference>
<dbReference type="SMR" id="P0A3V2"/>
<dbReference type="UniPathway" id="UPA00151"/>
<dbReference type="GO" id="GO:0050361">
    <property type="term" value="F:tryptophan 2-monooxygenase activity"/>
    <property type="evidence" value="ECO:0007669"/>
    <property type="project" value="UniProtKB-EC"/>
</dbReference>
<dbReference type="GO" id="GO:0009851">
    <property type="term" value="P:auxin biosynthetic process"/>
    <property type="evidence" value="ECO:0007669"/>
    <property type="project" value="UniProtKB-UniPathway"/>
</dbReference>
<dbReference type="Gene3D" id="1.10.405.40">
    <property type="match status" value="1"/>
</dbReference>
<dbReference type="Gene3D" id="3.90.660.10">
    <property type="match status" value="1"/>
</dbReference>
<dbReference type="Gene3D" id="3.50.50.60">
    <property type="entry name" value="FAD/NAD(P)-binding domain"/>
    <property type="match status" value="1"/>
</dbReference>
<dbReference type="InterPro" id="IPR002937">
    <property type="entry name" value="Amino_oxidase"/>
</dbReference>
<dbReference type="InterPro" id="IPR036188">
    <property type="entry name" value="FAD/NAD-bd_sf"/>
</dbReference>
<dbReference type="InterPro" id="IPR050281">
    <property type="entry name" value="Flavin_monoamine_oxidase"/>
</dbReference>
<dbReference type="InterPro" id="IPR006064">
    <property type="entry name" value="Glycosidase"/>
</dbReference>
<dbReference type="InterPro" id="IPR012142">
    <property type="entry name" value="Trp_2-mOase"/>
</dbReference>
<dbReference type="PANTHER" id="PTHR10742">
    <property type="entry name" value="FLAVIN MONOAMINE OXIDASE"/>
    <property type="match status" value="1"/>
</dbReference>
<dbReference type="PANTHER" id="PTHR10742:SF410">
    <property type="entry name" value="LYSINE-SPECIFIC HISTONE DEMETHYLASE 2"/>
    <property type="match status" value="1"/>
</dbReference>
<dbReference type="Pfam" id="PF01593">
    <property type="entry name" value="Amino_oxidase"/>
    <property type="match status" value="1"/>
</dbReference>
<dbReference type="Pfam" id="PF02027">
    <property type="entry name" value="RolB_RolC"/>
    <property type="match status" value="1"/>
</dbReference>
<dbReference type="PIRSF" id="PIRSF000319">
    <property type="entry name" value="Trp_2-mono_O2ase"/>
    <property type="match status" value="1"/>
</dbReference>
<dbReference type="PRINTS" id="PR00419">
    <property type="entry name" value="ADXRDTASE"/>
</dbReference>
<dbReference type="SUPFAM" id="SSF54373">
    <property type="entry name" value="FAD-linked reductases, C-terminal domain"/>
    <property type="match status" value="1"/>
</dbReference>
<dbReference type="SUPFAM" id="SSF51905">
    <property type="entry name" value="FAD/NAD(P)-binding domain"/>
    <property type="match status" value="1"/>
</dbReference>
<proteinExistence type="inferred from homology"/>
<feature type="chain" id="PRO_0000065586" description="Tryptophan 2-monooxygenase">
    <location>
        <begin position="1"/>
        <end position="755"/>
    </location>
</feature>
<feature type="binding site" evidence="1">
    <location>
        <position position="247"/>
    </location>
    <ligand>
        <name>FMN</name>
        <dbReference type="ChEBI" id="CHEBI:58210"/>
    </ligand>
</feature>
<feature type="binding site" evidence="1">
    <location>
        <position position="267"/>
    </location>
    <ligand>
        <name>FMN</name>
        <dbReference type="ChEBI" id="CHEBI:58210"/>
    </ligand>
</feature>
<feature type="binding site" evidence="1">
    <location>
        <position position="275"/>
    </location>
    <ligand>
        <name>FMN</name>
        <dbReference type="ChEBI" id="CHEBI:58210"/>
    </ligand>
</feature>
<feature type="binding site" evidence="1">
    <location>
        <position position="295"/>
    </location>
    <ligand>
        <name>FMN</name>
        <dbReference type="ChEBI" id="CHEBI:58210"/>
    </ligand>
</feature>
<feature type="binding site" evidence="1">
    <location>
        <position position="295"/>
    </location>
    <ligand>
        <name>substrate</name>
    </ligand>
</feature>
<gene>
    <name type="primary">tms1</name>
</gene>